<accession>A2S1Q7</accession>
<accession>A2S1Q5</accession>
<feature type="chain" id="PRO_0000344028" description="Guanine nucleotide exchange factor BopE">
    <location>
        <begin position="1"/>
        <end position="261"/>
    </location>
</feature>
<sequence length="261" mass="28735">MTYNPRIGGFTHVKQASFDVHVKRGEAQPRTSFAQQIKRIFSKIGETLGQLFRHRAPDSAPGRVRLQGVRYVGSYRPTGDAKQAIRHFVDEAVKQVAHTRTPEIRQDAEFGRQVYEATLCAIFSEAKDRFCMDPATRAGNVRPAFIEALGDAARATGLPGADKQGVFTPSGAGTNPLYTEIRLRADTLMGAELAARPEYRELQPYARQQAIDLVANALPAERSNTLVEFRQTVQTLEATYRRAAQDASRDEKGATNAADGA</sequence>
<reference key="1">
    <citation type="journal article" date="2010" name="Genome Biol. Evol.">
        <title>Continuing evolution of Burkholderia mallei through genome reduction and large-scale rearrangements.</title>
        <authorList>
            <person name="Losada L."/>
            <person name="Ronning C.M."/>
            <person name="DeShazer D."/>
            <person name="Woods D."/>
            <person name="Fedorova N."/>
            <person name="Kim H.S."/>
            <person name="Shabalina S.A."/>
            <person name="Pearson T.R."/>
            <person name="Brinkac L."/>
            <person name="Tan P."/>
            <person name="Nandi T."/>
            <person name="Crabtree J."/>
            <person name="Badger J."/>
            <person name="Beckstrom-Sternberg S."/>
            <person name="Saqib M."/>
            <person name="Schutzer S.E."/>
            <person name="Keim P."/>
            <person name="Nierman W.C."/>
        </authorList>
    </citation>
    <scope>NUCLEOTIDE SEQUENCE [LARGE SCALE GENOMIC DNA]</scope>
    <source>
        <strain>NCTC 10229</strain>
    </source>
</reference>
<gene>
    <name type="primary">bopE</name>
    <name type="ordered locus">BMA10229_2078</name>
</gene>
<proteinExistence type="inferred from homology"/>
<keyword id="KW-0343">GTPase activation</keyword>
<keyword id="KW-0344">Guanine-nucleotide releasing factor</keyword>
<keyword id="KW-0964">Secreted</keyword>
<keyword id="KW-0843">Virulence</keyword>
<evidence type="ECO:0000250" key="1"/>
<evidence type="ECO:0000305" key="2"/>
<comment type="function">
    <text evidence="1">Activator for both CDC42 and RAC1 by directly interacting with these Rho GTPases and acting as a guanine nucleotide exchange factor (GEF). This activation results in actin cytoskeleton rearrangements and stimulates membrane ruffling, thus promoting bacterial entry into non-phagocytic cells (By similarity).</text>
</comment>
<comment type="subunit">
    <text evidence="1">Monomer. Interacts with human CDC42 (By similarity).</text>
</comment>
<comment type="subcellular location">
    <subcellularLocation>
        <location evidence="1">Secreted</location>
    </subcellularLocation>
    <text evidence="1">Secreted via the bsa type III secretion system.</text>
</comment>
<comment type="similarity">
    <text evidence="2">Belongs to the GEF (guanine exchange factor) SopE family.</text>
</comment>
<dbReference type="EMBL" id="CP000545">
    <property type="protein sequence ID" value="ABN00329.2"/>
    <property type="molecule type" value="Genomic_DNA"/>
</dbReference>
<dbReference type="RefSeq" id="WP_004188462.1">
    <property type="nucleotide sequence ID" value="NC_008835.1"/>
</dbReference>
<dbReference type="BMRB" id="A2S1Q7"/>
<dbReference type="SMR" id="A2S1Q7"/>
<dbReference type="GeneID" id="93063705"/>
<dbReference type="KEGG" id="bml:BMA10229_2078"/>
<dbReference type="HOGENOM" id="CLU_1064256_0_0_4"/>
<dbReference type="Proteomes" id="UP000002283">
    <property type="component" value="Chromosome II"/>
</dbReference>
<dbReference type="GO" id="GO:0005576">
    <property type="term" value="C:extracellular region"/>
    <property type="evidence" value="ECO:0007669"/>
    <property type="project" value="UniProtKB-SubCell"/>
</dbReference>
<dbReference type="GO" id="GO:0005096">
    <property type="term" value="F:GTPase activator activity"/>
    <property type="evidence" value="ECO:0007669"/>
    <property type="project" value="UniProtKB-KW"/>
</dbReference>
<dbReference type="GO" id="GO:0005085">
    <property type="term" value="F:guanyl-nucleotide exchange factor activity"/>
    <property type="evidence" value="ECO:0007669"/>
    <property type="project" value="UniProtKB-KW"/>
</dbReference>
<dbReference type="GO" id="GO:0030036">
    <property type="term" value="P:actin cytoskeleton organization"/>
    <property type="evidence" value="ECO:0007669"/>
    <property type="project" value="InterPro"/>
</dbReference>
<dbReference type="Gene3D" id="1.10.4120.10">
    <property type="entry name" value="SopE-like, GEF domain"/>
    <property type="match status" value="1"/>
</dbReference>
<dbReference type="InterPro" id="IPR005414">
    <property type="entry name" value="SopE"/>
</dbReference>
<dbReference type="InterPro" id="IPR035949">
    <property type="entry name" value="SopE-like_GEF_dom_sf"/>
</dbReference>
<dbReference type="InterPro" id="IPR016019">
    <property type="entry name" value="SopE_GEF_dom"/>
</dbReference>
<dbReference type="NCBIfam" id="NF011808">
    <property type="entry name" value="PRK15278.1"/>
    <property type="match status" value="1"/>
</dbReference>
<dbReference type="Pfam" id="PF07487">
    <property type="entry name" value="SopE_GEF"/>
    <property type="match status" value="1"/>
</dbReference>
<dbReference type="PIRSF" id="PIRSF034781">
    <property type="entry name" value="SecIII_sopE"/>
    <property type="match status" value="1"/>
</dbReference>
<dbReference type="PRINTS" id="PR01593">
    <property type="entry name" value="SOPEPROTEIN"/>
</dbReference>
<dbReference type="SUPFAM" id="SSF81832">
    <property type="entry name" value="SopE-like GEF domain"/>
    <property type="match status" value="1"/>
</dbReference>
<protein>
    <recommendedName>
        <fullName>Guanine nucleotide exchange factor BopE</fullName>
    </recommendedName>
    <alternativeName>
        <fullName>Effector protein BopE</fullName>
    </alternativeName>
</protein>
<name>BOPE_BURM9</name>
<organism>
    <name type="scientific">Burkholderia mallei (strain NCTC 10229)</name>
    <dbReference type="NCBI Taxonomy" id="412022"/>
    <lineage>
        <taxon>Bacteria</taxon>
        <taxon>Pseudomonadati</taxon>
        <taxon>Pseudomonadota</taxon>
        <taxon>Betaproteobacteria</taxon>
        <taxon>Burkholderiales</taxon>
        <taxon>Burkholderiaceae</taxon>
        <taxon>Burkholderia</taxon>
        <taxon>pseudomallei group</taxon>
    </lineage>
</organism>